<accession>P41130</accession>
<protein>
    <recommendedName>
        <fullName>Maltose-binding periplasmic protein</fullName>
    </recommendedName>
    <alternativeName>
        <fullName>MBP</fullName>
    </alternativeName>
    <alternativeName>
        <fullName>MMBP</fullName>
    </alternativeName>
    <alternativeName>
        <fullName>Maltodextrin-binding protein</fullName>
    </alternativeName>
</protein>
<sequence length="73" mass="7829">MMTKTNLKMGARTLALSVLATLVLSASALAKIEEGKLVIWINGDKGYNGLAQVGEKFEKDTGVNVTVEHPDKL</sequence>
<reference key="1">
    <citation type="submission" date="1993-11" db="EMBL/GenBank/DDBJ databases">
        <title>Cloning and sequencing of the MalB regulatory region from Photorhabous inminescens K122.</title>
        <authorList>
            <person name="Clarke D.J."/>
            <person name="Dowds B.C.A."/>
        </authorList>
    </citation>
    <scope>NUCLEOTIDE SEQUENCE [GENOMIC DNA]</scope>
    <source>
        <strain>K122</strain>
    </source>
</reference>
<comment type="function">
    <text>Involved in the high-affinity maltose membrane transport system. Initial receptor for the active transport of and chemotaxis toward maltooligosaccharides.</text>
</comment>
<comment type="subcellular location">
    <subcellularLocation>
        <location>Periplasm</location>
    </subcellularLocation>
</comment>
<comment type="similarity">
    <text evidence="2">Belongs to the bacterial solute-binding protein 1 family.</text>
</comment>
<organism>
    <name type="scientific">Photorhabdus luminescens</name>
    <name type="common">Xenorhabdus luminescens</name>
    <dbReference type="NCBI Taxonomy" id="29488"/>
    <lineage>
        <taxon>Bacteria</taxon>
        <taxon>Pseudomonadati</taxon>
        <taxon>Pseudomonadota</taxon>
        <taxon>Gammaproteobacteria</taxon>
        <taxon>Enterobacterales</taxon>
        <taxon>Morganellaceae</taxon>
        <taxon>Photorhabdus</taxon>
    </lineage>
</organism>
<gene>
    <name type="primary">malE</name>
</gene>
<evidence type="ECO:0000255" key="1"/>
<evidence type="ECO:0000305" key="2"/>
<keyword id="KW-0574">Periplasm</keyword>
<keyword id="KW-0732">Signal</keyword>
<keyword id="KW-0762">Sugar transport</keyword>
<keyword id="KW-0813">Transport</keyword>
<dbReference type="EMBL" id="X76068">
    <property type="protein sequence ID" value="CAA53668.1"/>
    <property type="molecule type" value="Genomic_DNA"/>
</dbReference>
<dbReference type="PIR" id="S38880">
    <property type="entry name" value="S38880"/>
</dbReference>
<dbReference type="SMR" id="P41130"/>
<dbReference type="STRING" id="29488.KS18_20015"/>
<dbReference type="GO" id="GO:0042597">
    <property type="term" value="C:periplasmic space"/>
    <property type="evidence" value="ECO:0007669"/>
    <property type="project" value="UniProtKB-SubCell"/>
</dbReference>
<dbReference type="Gene3D" id="1.10.8.40">
    <property type="entry name" value="Albumin-binding domain"/>
    <property type="match status" value="1"/>
</dbReference>
<dbReference type="SUPFAM" id="SSF53850">
    <property type="entry name" value="Periplasmic binding protein-like II"/>
    <property type="match status" value="1"/>
</dbReference>
<feature type="signal peptide" evidence="1">
    <location>
        <begin position="1"/>
        <end position="30"/>
    </location>
</feature>
<feature type="chain" id="PRO_0000031696" description="Maltose-binding periplasmic protein">
    <location>
        <begin position="31"/>
        <end position="73" status="greater than"/>
    </location>
</feature>
<feature type="non-terminal residue">
    <location>
        <position position="73"/>
    </location>
</feature>
<proteinExistence type="inferred from homology"/>
<name>MALE_PHOLU</name>